<reference key="1">
    <citation type="journal article" date="2008" name="Cell. Mol. Life Sci.">
        <title>Molecular diversity and evolution of cystine knot toxins of the tarantula Chilobrachys jingzhao.</title>
        <authorList>
            <person name="Chen J."/>
            <person name="Deng M."/>
            <person name="He Q."/>
            <person name="Meng E."/>
            <person name="Jiang L."/>
            <person name="Liao Z."/>
            <person name="Rong M."/>
            <person name="Liang S."/>
        </authorList>
    </citation>
    <scope>NUCLEOTIDE SEQUENCE [LARGE SCALE MRNA]</scope>
    <source>
        <tissue>Venom gland</tissue>
    </source>
</reference>
<reference key="2">
    <citation type="journal article" date="2007" name="Proteomics">
        <title>Proteomic and peptidomic analysis of the venom from Chinese tarantula Chilobrachys jingzhao.</title>
        <authorList>
            <person name="Liao Z."/>
            <person name="Cao J."/>
            <person name="Li S."/>
            <person name="Yan X."/>
            <person name="Hu W."/>
            <person name="He Q."/>
            <person name="Chen J."/>
            <person name="Tang J."/>
            <person name="Xie J."/>
            <person name="Liang S."/>
        </authorList>
    </citation>
    <scope>PROTEIN SEQUENCE OF 48-82</scope>
    <scope>MASS SPECTROMETRY</scope>
    <scope>AMIDATION AT VAL-82</scope>
    <source>
        <tissue>Venom</tissue>
    </source>
</reference>
<name>JZ38B_CHIGU</name>
<feature type="signal peptide" evidence="2">
    <location>
        <begin position="1"/>
        <end position="21"/>
    </location>
</feature>
<feature type="propeptide" id="PRO_0000398481" evidence="3">
    <location>
        <begin position="22"/>
        <end position="47"/>
    </location>
</feature>
<feature type="peptide" id="PRO_0000398482" description="U21-theraphotoxin-Cg1a 2">
    <location>
        <begin position="48"/>
        <end position="82"/>
    </location>
</feature>
<feature type="modified residue" description="Valine amide" evidence="3">
    <location>
        <position position="82"/>
    </location>
</feature>
<feature type="disulfide bond" evidence="1">
    <location>
        <begin position="49"/>
        <end position="63"/>
    </location>
</feature>
<feature type="disulfide bond" evidence="1">
    <location>
        <begin position="56"/>
        <end position="68"/>
    </location>
</feature>
<feature type="disulfide bond" evidence="1">
    <location>
        <begin position="62"/>
        <end position="76"/>
    </location>
</feature>
<proteinExistence type="evidence at protein level"/>
<evidence type="ECO:0000250" key="1">
    <source>
        <dbReference type="UniProtKB" id="P0C247"/>
    </source>
</evidence>
<evidence type="ECO:0000255" key="2"/>
<evidence type="ECO:0000269" key="3">
    <source>
    </source>
</evidence>
<evidence type="ECO:0000305" key="4"/>
<protein>
    <recommendedName>
        <fullName>U21-theraphotoxin-Cg1a 2</fullName>
        <shortName>U21-TRTX-Cg1a</shortName>
    </recommendedName>
    <alternativeName>
        <fullName>Jingzhaotoxin-38.2</fullName>
        <shortName>JZTX-38.2</shortName>
    </alternativeName>
    <alternativeName>
        <fullName>Peptide F4-25.19</fullName>
    </alternativeName>
</protein>
<accession>B1P1G0</accession>
<organism>
    <name type="scientific">Chilobrachys guangxiensis</name>
    <name type="common">Chinese earth tiger tarantula</name>
    <name type="synonym">Chilobrachys jingzhao</name>
    <dbReference type="NCBI Taxonomy" id="278060"/>
    <lineage>
        <taxon>Eukaryota</taxon>
        <taxon>Metazoa</taxon>
        <taxon>Ecdysozoa</taxon>
        <taxon>Arthropoda</taxon>
        <taxon>Chelicerata</taxon>
        <taxon>Arachnida</taxon>
        <taxon>Araneae</taxon>
        <taxon>Mygalomorphae</taxon>
        <taxon>Theraphosidae</taxon>
        <taxon>Chilobrachys</taxon>
    </lineage>
</organism>
<keyword id="KW-0027">Amidation</keyword>
<keyword id="KW-0903">Direct protein sequencing</keyword>
<keyword id="KW-1015">Disulfide bond</keyword>
<keyword id="KW-0872">Ion channel impairing toxin</keyword>
<keyword id="KW-0960">Knottin</keyword>
<keyword id="KW-0964">Secreted</keyword>
<keyword id="KW-0732">Signal</keyword>
<keyword id="KW-0800">Toxin</keyword>
<dbReference type="EMBL" id="EU233891">
    <property type="protein sequence ID" value="ABY71710.1"/>
    <property type="molecule type" value="mRNA"/>
</dbReference>
<dbReference type="SMR" id="B1P1G0"/>
<dbReference type="ArachnoServer" id="AS000839">
    <property type="toxin name" value="U21-theraphotoxin-Cg1a"/>
</dbReference>
<dbReference type="GO" id="GO:0005576">
    <property type="term" value="C:extracellular region"/>
    <property type="evidence" value="ECO:0007669"/>
    <property type="project" value="UniProtKB-SubCell"/>
</dbReference>
<dbReference type="GO" id="GO:0008200">
    <property type="term" value="F:ion channel inhibitor activity"/>
    <property type="evidence" value="ECO:0007669"/>
    <property type="project" value="InterPro"/>
</dbReference>
<dbReference type="GO" id="GO:0090729">
    <property type="term" value="F:toxin activity"/>
    <property type="evidence" value="ECO:0007669"/>
    <property type="project" value="UniProtKB-KW"/>
</dbReference>
<dbReference type="InterPro" id="IPR011696">
    <property type="entry name" value="Huwentoxin-1"/>
</dbReference>
<dbReference type="Pfam" id="PF07740">
    <property type="entry name" value="Toxin_12"/>
    <property type="match status" value="1"/>
</dbReference>
<dbReference type="SUPFAM" id="SSF57059">
    <property type="entry name" value="omega toxin-like"/>
    <property type="match status" value="1"/>
</dbReference>
<comment type="function">
    <text>Probable ion channel inhibitor.</text>
</comment>
<comment type="subcellular location">
    <subcellularLocation>
        <location>Secreted</location>
    </subcellularLocation>
</comment>
<comment type="tissue specificity">
    <text>Expressed by the venom gland.</text>
</comment>
<comment type="domain">
    <text evidence="1">The presence of a 'disulfide through disulfide knot' structurally defines this protein as a knottin.</text>
</comment>
<comment type="mass spectrometry">
    <text>Monoisotopic mass.</text>
</comment>
<comment type="similarity">
    <text evidence="4">Belongs to the neurotoxin 10 (Hwtx-1) family. 05 (F4a) subfamily.</text>
</comment>
<sequence>MKVSVLITLAVLGVMFLFTSAEERGSDQMDSPAWLKSMEIIFQSEERECRWLFGGCEKDSDCCEHLGCRRAKPSWCGWDFTVGK</sequence>